<protein>
    <recommendedName>
        <fullName evidence="1">3-hydroxyanthranilate 3,4-dioxygenase</fullName>
        <ecNumber evidence="1">1.13.11.6</ecNumber>
    </recommendedName>
    <alternativeName>
        <fullName evidence="1">3-hydroxyanthranilate oxygenase</fullName>
        <shortName evidence="1">3-HAO</shortName>
    </alternativeName>
    <alternativeName>
        <fullName evidence="1">3-hydroxyanthranilic acid dioxygenase</fullName>
        <shortName evidence="1">HAD</shortName>
    </alternativeName>
</protein>
<feature type="chain" id="PRO_1000134550" description="3-hydroxyanthranilate 3,4-dioxygenase">
    <location>
        <begin position="1"/>
        <end position="189"/>
    </location>
</feature>
<feature type="binding site" evidence="1">
    <location>
        <position position="46"/>
    </location>
    <ligand>
        <name>O2</name>
        <dbReference type="ChEBI" id="CHEBI:15379"/>
    </ligand>
</feature>
<feature type="binding site" evidence="1">
    <location>
        <position position="50"/>
    </location>
    <ligand>
        <name>Fe cation</name>
        <dbReference type="ChEBI" id="CHEBI:24875"/>
        <label>1</label>
        <note>catalytic</note>
    </ligand>
</feature>
<feature type="binding site" evidence="1">
    <location>
        <position position="56"/>
    </location>
    <ligand>
        <name>Fe cation</name>
        <dbReference type="ChEBI" id="CHEBI:24875"/>
        <label>1</label>
        <note>catalytic</note>
    </ligand>
</feature>
<feature type="binding site" evidence="1">
    <location>
        <position position="56"/>
    </location>
    <ligand>
        <name>substrate</name>
    </ligand>
</feature>
<feature type="binding site" evidence="1">
    <location>
        <position position="94"/>
    </location>
    <ligand>
        <name>Fe cation</name>
        <dbReference type="ChEBI" id="CHEBI:24875"/>
        <label>1</label>
        <note>catalytic</note>
    </ligand>
</feature>
<feature type="binding site" evidence="1">
    <location>
        <position position="98"/>
    </location>
    <ligand>
        <name>substrate</name>
    </ligand>
</feature>
<feature type="binding site" evidence="1">
    <location>
        <position position="109"/>
    </location>
    <ligand>
        <name>substrate</name>
    </ligand>
</feature>
<feature type="binding site" evidence="1">
    <location>
        <position position="124"/>
    </location>
    <ligand>
        <name>Fe cation</name>
        <dbReference type="ChEBI" id="CHEBI:24875"/>
        <label>2</label>
    </ligand>
</feature>
<feature type="binding site" evidence="1">
    <location>
        <position position="127"/>
    </location>
    <ligand>
        <name>Fe cation</name>
        <dbReference type="ChEBI" id="CHEBI:24875"/>
        <label>2</label>
    </ligand>
</feature>
<feature type="binding site" evidence="1">
    <location>
        <position position="161"/>
    </location>
    <ligand>
        <name>Fe cation</name>
        <dbReference type="ChEBI" id="CHEBI:24875"/>
        <label>2</label>
    </ligand>
</feature>
<feature type="binding site" evidence="1">
    <location>
        <position position="164"/>
    </location>
    <ligand>
        <name>Fe cation</name>
        <dbReference type="ChEBI" id="CHEBI:24875"/>
        <label>2</label>
    </ligand>
</feature>
<name>3HAO_SHEWM</name>
<accession>B1KJM7</accession>
<sequence length="189" mass="21866">MSKLAAFNFQQWIDEHQHLLKPPVGNVQIWENTDMMVTVVGGPNQRTDFHDDPVEEFFYQLKGDMVLKIIEEGKCHDLFIREGDIFFLPPHVRHSPQRPMPGSIGLVIEPKRPEGAKDAFEWYCFKCDGLVHRVEVLLKSIVRDLPPIYQAFYQDEQARTCPQCGELHPGKEPPQGWVTLLENKEQDKS</sequence>
<proteinExistence type="inferred from homology"/>
<organism>
    <name type="scientific">Shewanella woodyi (strain ATCC 51908 / MS32)</name>
    <dbReference type="NCBI Taxonomy" id="392500"/>
    <lineage>
        <taxon>Bacteria</taxon>
        <taxon>Pseudomonadati</taxon>
        <taxon>Pseudomonadota</taxon>
        <taxon>Gammaproteobacteria</taxon>
        <taxon>Alteromonadales</taxon>
        <taxon>Shewanellaceae</taxon>
        <taxon>Shewanella</taxon>
    </lineage>
</organism>
<reference key="1">
    <citation type="submission" date="2008-02" db="EMBL/GenBank/DDBJ databases">
        <title>Complete sequence of Shewanella woodyi ATCC 51908.</title>
        <authorList>
            <consortium name="US DOE Joint Genome Institute"/>
            <person name="Copeland A."/>
            <person name="Lucas S."/>
            <person name="Lapidus A."/>
            <person name="Glavina del Rio T."/>
            <person name="Dalin E."/>
            <person name="Tice H."/>
            <person name="Bruce D."/>
            <person name="Goodwin L."/>
            <person name="Pitluck S."/>
            <person name="Sims D."/>
            <person name="Brettin T."/>
            <person name="Detter J.C."/>
            <person name="Han C."/>
            <person name="Kuske C.R."/>
            <person name="Schmutz J."/>
            <person name="Larimer F."/>
            <person name="Land M."/>
            <person name="Hauser L."/>
            <person name="Kyrpides N."/>
            <person name="Lykidis A."/>
            <person name="Zhao J.-S."/>
            <person name="Richardson P."/>
        </authorList>
    </citation>
    <scope>NUCLEOTIDE SEQUENCE [LARGE SCALE GENOMIC DNA]</scope>
    <source>
        <strain>ATCC 51908 / MS32</strain>
    </source>
</reference>
<comment type="function">
    <text evidence="1">Catalyzes the oxidative ring opening of 3-hydroxyanthranilate to 2-amino-3-carboxymuconate semialdehyde, which spontaneously cyclizes to quinolinate.</text>
</comment>
<comment type="catalytic activity">
    <reaction evidence="1">
        <text>3-hydroxyanthranilate + O2 = (2Z,4Z)-2-amino-3-carboxymuconate 6-semialdehyde</text>
        <dbReference type="Rhea" id="RHEA:17953"/>
        <dbReference type="ChEBI" id="CHEBI:15379"/>
        <dbReference type="ChEBI" id="CHEBI:36559"/>
        <dbReference type="ChEBI" id="CHEBI:77612"/>
        <dbReference type="EC" id="1.13.11.6"/>
    </reaction>
</comment>
<comment type="cofactor">
    <cofactor evidence="1">
        <name>Fe(2+)</name>
        <dbReference type="ChEBI" id="CHEBI:29033"/>
    </cofactor>
    <text evidence="1">Binds 2 Fe(2+) ions per subunit.</text>
</comment>
<comment type="pathway">
    <text evidence="1">Cofactor biosynthesis; NAD(+) biosynthesis; quinolinate from L-kynurenine: step 3/3.</text>
</comment>
<comment type="subunit">
    <text evidence="1">Homodimer.</text>
</comment>
<comment type="similarity">
    <text evidence="1">Belongs to the 3-HAO family.</text>
</comment>
<gene>
    <name evidence="1" type="primary">nbaC</name>
    <name type="ordered locus">Swoo_1408</name>
</gene>
<evidence type="ECO:0000255" key="1">
    <source>
        <dbReference type="HAMAP-Rule" id="MF_00825"/>
    </source>
</evidence>
<dbReference type="EC" id="1.13.11.6" evidence="1"/>
<dbReference type="EMBL" id="CP000961">
    <property type="protein sequence ID" value="ACA85700.1"/>
    <property type="molecule type" value="Genomic_DNA"/>
</dbReference>
<dbReference type="RefSeq" id="WP_012324046.1">
    <property type="nucleotide sequence ID" value="NC_010506.1"/>
</dbReference>
<dbReference type="SMR" id="B1KJM7"/>
<dbReference type="STRING" id="392500.Swoo_1408"/>
<dbReference type="KEGG" id="swd:Swoo_1408"/>
<dbReference type="eggNOG" id="COG1917">
    <property type="taxonomic scope" value="Bacteria"/>
</dbReference>
<dbReference type="HOGENOM" id="CLU_095765_0_0_6"/>
<dbReference type="UniPathway" id="UPA00253">
    <property type="reaction ID" value="UER00330"/>
</dbReference>
<dbReference type="Proteomes" id="UP000002168">
    <property type="component" value="Chromosome"/>
</dbReference>
<dbReference type="GO" id="GO:0000334">
    <property type="term" value="F:3-hydroxyanthranilate 3,4-dioxygenase activity"/>
    <property type="evidence" value="ECO:0007669"/>
    <property type="project" value="UniProtKB-UniRule"/>
</dbReference>
<dbReference type="GO" id="GO:0008198">
    <property type="term" value="F:ferrous iron binding"/>
    <property type="evidence" value="ECO:0007669"/>
    <property type="project" value="UniProtKB-UniRule"/>
</dbReference>
<dbReference type="GO" id="GO:0043420">
    <property type="term" value="P:anthranilate metabolic process"/>
    <property type="evidence" value="ECO:0007669"/>
    <property type="project" value="UniProtKB-UniRule"/>
</dbReference>
<dbReference type="GO" id="GO:0006569">
    <property type="term" value="P:L-tryptophan catabolic process"/>
    <property type="evidence" value="ECO:0007669"/>
    <property type="project" value="UniProtKB-UniRule"/>
</dbReference>
<dbReference type="GO" id="GO:0009435">
    <property type="term" value="P:NAD biosynthetic process"/>
    <property type="evidence" value="ECO:0007669"/>
    <property type="project" value="UniProtKB-UniPathway"/>
</dbReference>
<dbReference type="GO" id="GO:0019805">
    <property type="term" value="P:quinolinate biosynthetic process"/>
    <property type="evidence" value="ECO:0007669"/>
    <property type="project" value="UniProtKB-UniRule"/>
</dbReference>
<dbReference type="CDD" id="cd06123">
    <property type="entry name" value="cupin_HAO"/>
    <property type="match status" value="1"/>
</dbReference>
<dbReference type="Gene3D" id="2.60.120.10">
    <property type="entry name" value="Jelly Rolls"/>
    <property type="match status" value="1"/>
</dbReference>
<dbReference type="HAMAP" id="MF_00825">
    <property type="entry name" value="3_HAO"/>
    <property type="match status" value="1"/>
</dbReference>
<dbReference type="InterPro" id="IPR010329">
    <property type="entry name" value="3hydroanth_dOase"/>
</dbReference>
<dbReference type="InterPro" id="IPR014710">
    <property type="entry name" value="RmlC-like_jellyroll"/>
</dbReference>
<dbReference type="InterPro" id="IPR011051">
    <property type="entry name" value="RmlC_Cupin_sf"/>
</dbReference>
<dbReference type="NCBIfam" id="TIGR03037">
    <property type="entry name" value="anthran_nbaC"/>
    <property type="match status" value="1"/>
</dbReference>
<dbReference type="NCBIfam" id="NF009763">
    <property type="entry name" value="PRK13264.1"/>
    <property type="match status" value="1"/>
</dbReference>
<dbReference type="PANTHER" id="PTHR15497">
    <property type="entry name" value="3-HYDROXYANTHRANILATE 3,4-DIOXYGENASE"/>
    <property type="match status" value="1"/>
</dbReference>
<dbReference type="PANTHER" id="PTHR15497:SF1">
    <property type="entry name" value="3-HYDROXYANTHRANILATE 3,4-DIOXYGENASE"/>
    <property type="match status" value="1"/>
</dbReference>
<dbReference type="Pfam" id="PF06052">
    <property type="entry name" value="3-HAO"/>
    <property type="match status" value="1"/>
</dbReference>
<dbReference type="SUPFAM" id="SSF51182">
    <property type="entry name" value="RmlC-like cupins"/>
    <property type="match status" value="1"/>
</dbReference>
<keyword id="KW-0223">Dioxygenase</keyword>
<keyword id="KW-0408">Iron</keyword>
<keyword id="KW-0479">Metal-binding</keyword>
<keyword id="KW-0560">Oxidoreductase</keyword>
<keyword id="KW-0662">Pyridine nucleotide biosynthesis</keyword>
<keyword id="KW-1185">Reference proteome</keyword>